<sequence length="287" mass="30688">MSEKHIDEFSGVETTGHEWDGIRELNNPMPRWWVWTFYATIVWALGYAIAYPAIPMITDATKGMLGFSSRAELQQNLDQAKASQTTLHDLIAAKTVHEIDSDSALREFAIAGGASAFKVNCATCHGSGASGGPGFPNLNDDDWLWGGDLDAIQATIAHGIRFDGDTDTHASEMPPFAEVLDPLQTRQVAAYVWGLTNTPSDPGLAEAGKQVFVDNCAACHGDDAKGKAEMGAPDLADAIWLKARGEDAIIRQVAAPKHGVMPAWAGRLGDTTVKELTIFVHSLGGGT</sequence>
<gene>
    <name evidence="11" type="primary">fixPc</name>
</gene>
<organism>
    <name type="scientific">Rhizobium leguminosarum bv. viciae</name>
    <dbReference type="NCBI Taxonomy" id="387"/>
    <lineage>
        <taxon>Bacteria</taxon>
        <taxon>Pseudomonadati</taxon>
        <taxon>Pseudomonadota</taxon>
        <taxon>Alphaproteobacteria</taxon>
        <taxon>Hyphomicrobiales</taxon>
        <taxon>Rhizobiaceae</taxon>
        <taxon>Rhizobium/Agrobacterium group</taxon>
        <taxon>Rhizobium</taxon>
    </lineage>
</organism>
<keyword id="KW-0997">Cell inner membrane</keyword>
<keyword id="KW-1003">Cell membrane</keyword>
<keyword id="KW-0249">Electron transport</keyword>
<keyword id="KW-0349">Heme</keyword>
<keyword id="KW-0375">Hydrogen ion transport</keyword>
<keyword id="KW-0406">Ion transport</keyword>
<keyword id="KW-0408">Iron</keyword>
<keyword id="KW-0472">Membrane</keyword>
<keyword id="KW-0479">Metal-binding</keyword>
<keyword id="KW-0560">Oxidoreductase</keyword>
<keyword id="KW-0614">Plasmid</keyword>
<keyword id="KW-0677">Repeat</keyword>
<keyword id="KW-0679">Respiratory chain</keyword>
<keyword id="KW-0812">Transmembrane</keyword>
<keyword id="KW-1133">Transmembrane helix</keyword>
<keyword id="KW-0813">Transport</keyword>
<dbReference type="EMBL" id="Z80340">
    <property type="protein sequence ID" value="CAB02452.1"/>
    <property type="molecule type" value="Genomic_DNA"/>
</dbReference>
<dbReference type="SMR" id="P72287"/>
<dbReference type="OMA" id="YPAWPLV"/>
<dbReference type="UniPathway" id="UPA00705"/>
<dbReference type="GO" id="GO:0005886">
    <property type="term" value="C:plasma membrane"/>
    <property type="evidence" value="ECO:0007669"/>
    <property type="project" value="UniProtKB-SubCell"/>
</dbReference>
<dbReference type="GO" id="GO:0009055">
    <property type="term" value="F:electron transfer activity"/>
    <property type="evidence" value="ECO:0007669"/>
    <property type="project" value="InterPro"/>
</dbReference>
<dbReference type="GO" id="GO:0020037">
    <property type="term" value="F:heme binding"/>
    <property type="evidence" value="ECO:0007669"/>
    <property type="project" value="InterPro"/>
</dbReference>
<dbReference type="GO" id="GO:0005506">
    <property type="term" value="F:iron ion binding"/>
    <property type="evidence" value="ECO:0007669"/>
    <property type="project" value="InterPro"/>
</dbReference>
<dbReference type="GO" id="GO:0016491">
    <property type="term" value="F:oxidoreductase activity"/>
    <property type="evidence" value="ECO:0007669"/>
    <property type="project" value="UniProtKB-KW"/>
</dbReference>
<dbReference type="GO" id="GO:0006119">
    <property type="term" value="P:oxidative phosphorylation"/>
    <property type="evidence" value="ECO:0007669"/>
    <property type="project" value="UniProtKB-UniPathway"/>
</dbReference>
<dbReference type="GO" id="GO:1902600">
    <property type="term" value="P:proton transmembrane transport"/>
    <property type="evidence" value="ECO:0007669"/>
    <property type="project" value="UniProtKB-KW"/>
</dbReference>
<dbReference type="Gene3D" id="6.10.280.130">
    <property type="match status" value="1"/>
</dbReference>
<dbReference type="Gene3D" id="1.10.760.10">
    <property type="entry name" value="Cytochrome c-like domain"/>
    <property type="match status" value="2"/>
</dbReference>
<dbReference type="InterPro" id="IPR032858">
    <property type="entry name" value="CcoP_N"/>
</dbReference>
<dbReference type="InterPro" id="IPR038414">
    <property type="entry name" value="CcoP_N_sf"/>
</dbReference>
<dbReference type="InterPro" id="IPR009056">
    <property type="entry name" value="Cyt_c-like_dom"/>
</dbReference>
<dbReference type="InterPro" id="IPR036909">
    <property type="entry name" value="Cyt_c-like_dom_sf"/>
</dbReference>
<dbReference type="InterPro" id="IPR008168">
    <property type="entry name" value="Cyt_C_IC"/>
</dbReference>
<dbReference type="InterPro" id="IPR004678">
    <property type="entry name" value="Cyt_c_oxidase_cbb3_su3"/>
</dbReference>
<dbReference type="InterPro" id="IPR050597">
    <property type="entry name" value="Cytochrome_c_Oxidase_Subunit"/>
</dbReference>
<dbReference type="NCBIfam" id="TIGR00782">
    <property type="entry name" value="ccoP"/>
    <property type="match status" value="1"/>
</dbReference>
<dbReference type="PANTHER" id="PTHR33751">
    <property type="entry name" value="CBB3-TYPE CYTOCHROME C OXIDASE SUBUNIT FIXP"/>
    <property type="match status" value="1"/>
</dbReference>
<dbReference type="PANTHER" id="PTHR33751:SF1">
    <property type="entry name" value="CBB3-TYPE CYTOCHROME C OXIDASE SUBUNIT FIXP"/>
    <property type="match status" value="1"/>
</dbReference>
<dbReference type="Pfam" id="PF13442">
    <property type="entry name" value="Cytochrome_CBB3"/>
    <property type="match status" value="2"/>
</dbReference>
<dbReference type="Pfam" id="PF14715">
    <property type="entry name" value="FixP_N"/>
    <property type="match status" value="1"/>
</dbReference>
<dbReference type="PIRSF" id="PIRSF000006">
    <property type="entry name" value="Cbb3-Cox_fixP"/>
    <property type="match status" value="1"/>
</dbReference>
<dbReference type="PRINTS" id="PR00605">
    <property type="entry name" value="CYTCHROMECIC"/>
</dbReference>
<dbReference type="SUPFAM" id="SSF46626">
    <property type="entry name" value="Cytochrome c"/>
    <property type="match status" value="2"/>
</dbReference>
<dbReference type="PROSITE" id="PS51007">
    <property type="entry name" value="CYTC"/>
    <property type="match status" value="2"/>
</dbReference>
<name>FIXP_RHILV</name>
<evidence type="ECO:0000250" key="1">
    <source>
        <dbReference type="UniProtKB" id="D5ARP7"/>
    </source>
</evidence>
<evidence type="ECO:0000250" key="2">
    <source>
        <dbReference type="UniProtKB" id="D9IA45"/>
    </source>
</evidence>
<evidence type="ECO:0000250" key="3">
    <source>
        <dbReference type="UniProtKB" id="Q03075"/>
    </source>
</evidence>
<evidence type="ECO:0000250" key="4">
    <source>
        <dbReference type="UniProtKB" id="Q3J015"/>
    </source>
</evidence>
<evidence type="ECO:0000250" key="5">
    <source>
        <dbReference type="UniProtKB" id="Q52689"/>
    </source>
</evidence>
<evidence type="ECO:0000250" key="6">
    <source>
        <dbReference type="UniProtKB" id="Q8KLH5"/>
    </source>
</evidence>
<evidence type="ECO:0000250" key="7">
    <source>
        <dbReference type="UniProtKB" id="Q8KS19"/>
    </source>
</evidence>
<evidence type="ECO:0000255" key="8"/>
<evidence type="ECO:0000255" key="9">
    <source>
        <dbReference type="PROSITE-ProRule" id="PRU00433"/>
    </source>
</evidence>
<evidence type="ECO:0000305" key="10"/>
<evidence type="ECO:0000312" key="11">
    <source>
        <dbReference type="EMBL" id="CAB02452.1"/>
    </source>
</evidence>
<comment type="function">
    <text evidence="2 3 6">C-type cytochrome. Part of the cbb3-type cytochrome c oxidase complex. FixP subunit is required for transferring electrons from donor cytochrome c via its heme groups to FixO subunit. From there, electrons are shuttled to the catalytic binuclear center of FixN subunit where oxygen reduction takes place. The complex also functions as a proton pump (By similarity).</text>
</comment>
<comment type="cofactor">
    <cofactor evidence="2">
        <name>heme c</name>
        <dbReference type="ChEBI" id="CHEBI:61717"/>
    </cofactor>
    <text evidence="2">Binds 2 heme C groups per subunit.</text>
</comment>
<comment type="pathway">
    <text evidence="1">Energy metabolism; oxidative phosphorylation.</text>
</comment>
<comment type="subunit">
    <text evidence="1">Component of the cbb3-type cytochrome c oxidase at least composed of FixN, FixO, FixQ and FixP.</text>
</comment>
<comment type="subcellular location">
    <subcellularLocation>
        <location evidence="7 8">Cell inner membrane</location>
        <topology evidence="7 8">Single-pass membrane protein</topology>
    </subcellularLocation>
</comment>
<comment type="similarity">
    <text evidence="10">Belongs to the CcoP / FixP family.</text>
</comment>
<proteinExistence type="inferred from homology"/>
<protein>
    <recommendedName>
        <fullName evidence="1 11">Cbb3-type cytochrome c oxidase subunit FixPc</fullName>
        <shortName evidence="1">Cbb3-Cox subunit FixPc</shortName>
    </recommendedName>
    <alternativeName>
        <fullName evidence="5">C-type cytochrome FixPc</fullName>
        <shortName evidence="1">Cyt c(FixPc)</shortName>
    </alternativeName>
    <alternativeName>
        <fullName evidence="1">Cytochrome c oxidase subunit III</fullName>
    </alternativeName>
</protein>
<feature type="chain" id="PRO_0000412299" description="Cbb3-type cytochrome c oxidase subunit FixPc">
    <location>
        <begin position="1"/>
        <end position="287"/>
    </location>
</feature>
<feature type="topological domain" description="Cytoplasmic" evidence="4 8">
    <location>
        <begin position="1"/>
        <end position="36"/>
    </location>
</feature>
<feature type="transmembrane region" description="Helical" evidence="8">
    <location>
        <begin position="37"/>
        <end position="57"/>
    </location>
</feature>
<feature type="topological domain" description="Periplasmic" evidence="4 8">
    <location>
        <begin position="58"/>
        <end position="287"/>
    </location>
</feature>
<feature type="domain" description="Cytochrome c 1" evidence="9">
    <location>
        <begin position="108"/>
        <end position="196"/>
    </location>
</feature>
<feature type="domain" description="Cytochrome c 2" evidence="9">
    <location>
        <begin position="203"/>
        <end position="284"/>
    </location>
</feature>
<feature type="binding site" description="covalent" evidence="2">
    <location>
        <position position="121"/>
    </location>
    <ligand>
        <name>heme c</name>
        <dbReference type="ChEBI" id="CHEBI:61717"/>
        <label>1</label>
    </ligand>
</feature>
<feature type="binding site" description="covalent" evidence="2">
    <location>
        <position position="124"/>
    </location>
    <ligand>
        <name>heme c</name>
        <dbReference type="ChEBI" id="CHEBI:61717"/>
        <label>1</label>
    </ligand>
</feature>
<feature type="binding site" description="axial binding residue" evidence="2">
    <location>
        <position position="125"/>
    </location>
    <ligand>
        <name>heme c</name>
        <dbReference type="ChEBI" id="CHEBI:61717"/>
        <label>1</label>
    </ligand>
    <ligandPart>
        <name>Fe</name>
        <dbReference type="ChEBI" id="CHEBI:18248"/>
    </ligandPart>
</feature>
<feature type="binding site" description="axial binding residue" evidence="2">
    <location>
        <position position="173"/>
    </location>
    <ligand>
        <name>heme c</name>
        <dbReference type="ChEBI" id="CHEBI:61717"/>
        <label>2</label>
    </ligand>
    <ligandPart>
        <name>Fe</name>
        <dbReference type="ChEBI" id="CHEBI:18248"/>
    </ligandPart>
</feature>
<feature type="binding site" description="covalent" evidence="2">
    <location>
        <position position="216"/>
    </location>
    <ligand>
        <name>heme c</name>
        <dbReference type="ChEBI" id="CHEBI:61717"/>
        <label>2</label>
    </ligand>
</feature>
<feature type="binding site" description="covalent" evidence="2">
    <location>
        <position position="219"/>
    </location>
    <ligand>
        <name>heme c</name>
        <dbReference type="ChEBI" id="CHEBI:61717"/>
        <label>2</label>
    </ligand>
</feature>
<feature type="binding site" description="axial binding residue" evidence="2">
    <location>
        <position position="220"/>
    </location>
    <ligand>
        <name>heme c</name>
        <dbReference type="ChEBI" id="CHEBI:61717"/>
        <label>2</label>
    </ligand>
    <ligandPart>
        <name>Fe</name>
        <dbReference type="ChEBI" id="CHEBI:18248"/>
    </ligandPart>
</feature>
<feature type="binding site" description="axial binding residue" evidence="2">
    <location>
        <position position="261"/>
    </location>
    <ligand>
        <name>heme c</name>
        <dbReference type="ChEBI" id="CHEBI:61717"/>
        <label>1</label>
    </ligand>
    <ligandPart>
        <name>Fe</name>
        <dbReference type="ChEBI" id="CHEBI:18248"/>
    </ligandPart>
</feature>
<reference evidence="11" key="1">
    <citation type="journal article" date="1997" name="Mol. Plant Microbe Interact.">
        <title>Functional and regulatory analysis of the two copies of the fixNOQP operon of Rhizobium leguminosarum strain VF39.</title>
        <authorList>
            <person name="Schluter A."/>
            <person name="Patschkowski T."/>
            <person name="Quandt J."/>
            <person name="Selinger L.B."/>
            <person name="Weidner S."/>
            <person name="Kramer M."/>
            <person name="Zhou L."/>
            <person name="Hynes M.F."/>
            <person name="Priefer U.B."/>
        </authorList>
    </citation>
    <scope>NUCLEOTIDE SEQUENCE [GENOMIC DNA]</scope>
    <source>
        <strain evidence="11">VF39</strain>
    </source>
</reference>
<accession>P72287</accession>